<protein>
    <recommendedName>
        <fullName>Putative 4-hydroxy-4-methyl-2-oxoglutarate aldolase</fullName>
        <shortName>HMG aldolase</shortName>
        <ecNumber>4.1.3.17</ecNumber>
    </recommendedName>
    <alternativeName>
        <fullName>Oxaloacetate decarboxylase</fullName>
        <shortName>OAA decarboxylase</shortName>
        <ecNumber>4.1.1.112</ecNumber>
    </alternativeName>
    <alternativeName>
        <fullName>Regulator of ribonuclease activity homolog</fullName>
    </alternativeName>
    <alternativeName>
        <fullName>RraA-like protein</fullName>
    </alternativeName>
</protein>
<accession>Q2SK70</accession>
<comment type="function">
    <text evidence="1">Catalyzes the aldol cleavage of 4-hydroxy-4-methyl-2-oxoglutarate (HMG) into 2 molecules of pyruvate. Also contains a secondary oxaloacetate (OAA) decarboxylase activity due to the common pyruvate enolate transition state formed following C-C bond cleavage in the retro-aldol and decarboxylation reactions (By similarity).</text>
</comment>
<comment type="catalytic activity">
    <reaction>
        <text>4-hydroxy-4-methyl-2-oxoglutarate = 2 pyruvate</text>
        <dbReference type="Rhea" id="RHEA:22748"/>
        <dbReference type="ChEBI" id="CHEBI:15361"/>
        <dbReference type="ChEBI" id="CHEBI:58276"/>
        <dbReference type="EC" id="4.1.3.17"/>
    </reaction>
</comment>
<comment type="catalytic activity">
    <reaction>
        <text>oxaloacetate + H(+) = pyruvate + CO2</text>
        <dbReference type="Rhea" id="RHEA:15641"/>
        <dbReference type="ChEBI" id="CHEBI:15361"/>
        <dbReference type="ChEBI" id="CHEBI:15378"/>
        <dbReference type="ChEBI" id="CHEBI:16452"/>
        <dbReference type="ChEBI" id="CHEBI:16526"/>
        <dbReference type="EC" id="4.1.1.112"/>
    </reaction>
</comment>
<comment type="cofactor">
    <cofactor evidence="1">
        <name>a divalent metal cation</name>
        <dbReference type="ChEBI" id="CHEBI:60240"/>
    </cofactor>
    <text evidence="1">Divalent metal cation.</text>
</comment>
<comment type="subunit">
    <text evidence="1">Homotrimer.</text>
</comment>
<comment type="similarity">
    <text evidence="2">Belongs to the class II aldolase/RraA-like family.</text>
</comment>
<reference key="1">
    <citation type="journal article" date="2005" name="Nucleic Acids Res.">
        <title>Genomic blueprint of Hahella chejuensis, a marine microbe producing an algicidal agent.</title>
        <authorList>
            <person name="Jeong H."/>
            <person name="Yim J.H."/>
            <person name="Lee C."/>
            <person name="Choi S.-H."/>
            <person name="Park Y.K."/>
            <person name="Yoon S.H."/>
            <person name="Hur C.-G."/>
            <person name="Kang H.-Y."/>
            <person name="Kim D."/>
            <person name="Lee H.H."/>
            <person name="Park K.H."/>
            <person name="Park S.-H."/>
            <person name="Park H.-S."/>
            <person name="Lee H.K."/>
            <person name="Oh T.K."/>
            <person name="Kim J.F."/>
        </authorList>
    </citation>
    <scope>NUCLEOTIDE SEQUENCE [LARGE SCALE GENOMIC DNA]</scope>
    <source>
        <strain>KCTC 2396</strain>
    </source>
</reference>
<evidence type="ECO:0000250" key="1"/>
<evidence type="ECO:0000305" key="2"/>
<dbReference type="EC" id="4.1.3.17"/>
<dbReference type="EC" id="4.1.1.112"/>
<dbReference type="EMBL" id="CP000155">
    <property type="protein sequence ID" value="ABC28954.1"/>
    <property type="molecule type" value="Genomic_DNA"/>
</dbReference>
<dbReference type="RefSeq" id="WP_011396025.1">
    <property type="nucleotide sequence ID" value="NC_007645.1"/>
</dbReference>
<dbReference type="SMR" id="Q2SK70"/>
<dbReference type="STRING" id="349521.HCH_02125"/>
<dbReference type="KEGG" id="hch:HCH_02125"/>
<dbReference type="eggNOG" id="COG0684">
    <property type="taxonomic scope" value="Bacteria"/>
</dbReference>
<dbReference type="HOGENOM" id="CLU_072626_4_0_6"/>
<dbReference type="OrthoDB" id="943692at2"/>
<dbReference type="Proteomes" id="UP000000238">
    <property type="component" value="Chromosome"/>
</dbReference>
<dbReference type="GO" id="GO:0047443">
    <property type="term" value="F:4-hydroxy-4-methyl-2-oxoglutarate aldolase activity"/>
    <property type="evidence" value="ECO:0007669"/>
    <property type="project" value="UniProtKB-EC"/>
</dbReference>
<dbReference type="GO" id="GO:0046872">
    <property type="term" value="F:metal ion binding"/>
    <property type="evidence" value="ECO:0007669"/>
    <property type="project" value="UniProtKB-KW"/>
</dbReference>
<dbReference type="GO" id="GO:0008948">
    <property type="term" value="F:oxaloacetate decarboxylase activity"/>
    <property type="evidence" value="ECO:0007669"/>
    <property type="project" value="UniProtKB-EC"/>
</dbReference>
<dbReference type="GO" id="GO:0008428">
    <property type="term" value="F:ribonuclease inhibitor activity"/>
    <property type="evidence" value="ECO:0007669"/>
    <property type="project" value="InterPro"/>
</dbReference>
<dbReference type="GO" id="GO:0051252">
    <property type="term" value="P:regulation of RNA metabolic process"/>
    <property type="evidence" value="ECO:0007669"/>
    <property type="project" value="InterPro"/>
</dbReference>
<dbReference type="CDD" id="cd16841">
    <property type="entry name" value="RraA_family"/>
    <property type="match status" value="1"/>
</dbReference>
<dbReference type="Gene3D" id="3.50.30.40">
    <property type="entry name" value="Ribonuclease E inhibitor RraA/RraA-like"/>
    <property type="match status" value="1"/>
</dbReference>
<dbReference type="InterPro" id="IPR010203">
    <property type="entry name" value="RraA"/>
</dbReference>
<dbReference type="InterPro" id="IPR005493">
    <property type="entry name" value="RraA/RraA-like"/>
</dbReference>
<dbReference type="InterPro" id="IPR036704">
    <property type="entry name" value="RraA/RraA-like_sf"/>
</dbReference>
<dbReference type="NCBIfam" id="TIGR01935">
    <property type="entry name" value="NOT-MenG"/>
    <property type="match status" value="1"/>
</dbReference>
<dbReference type="NCBIfam" id="NF006875">
    <property type="entry name" value="PRK09372.1"/>
    <property type="match status" value="1"/>
</dbReference>
<dbReference type="NCBIfam" id="NF009134">
    <property type="entry name" value="PRK12487.1"/>
    <property type="match status" value="1"/>
</dbReference>
<dbReference type="PANTHER" id="PTHR33254">
    <property type="entry name" value="4-HYDROXY-4-METHYL-2-OXOGLUTARATE ALDOLASE 3-RELATED"/>
    <property type="match status" value="1"/>
</dbReference>
<dbReference type="PANTHER" id="PTHR33254:SF29">
    <property type="entry name" value="REGULATOR OF RIBONUCLEASE ACTIVITY A"/>
    <property type="match status" value="1"/>
</dbReference>
<dbReference type="Pfam" id="PF03737">
    <property type="entry name" value="RraA-like"/>
    <property type="match status" value="1"/>
</dbReference>
<dbReference type="SUPFAM" id="SSF89562">
    <property type="entry name" value="RraA-like"/>
    <property type="match status" value="1"/>
</dbReference>
<proteinExistence type="inferred from homology"/>
<organism>
    <name type="scientific">Hahella chejuensis (strain KCTC 2396)</name>
    <dbReference type="NCBI Taxonomy" id="349521"/>
    <lineage>
        <taxon>Bacteria</taxon>
        <taxon>Pseudomonadati</taxon>
        <taxon>Pseudomonadota</taxon>
        <taxon>Gammaproteobacteria</taxon>
        <taxon>Oceanospirillales</taxon>
        <taxon>Hahellaceae</taxon>
        <taxon>Hahella</taxon>
    </lineage>
</organism>
<sequence length="164" mass="17590">MKYVTPDLCDAYPQLVSVVEPMFQNFGAKSSFGGEIVTVKCFEDNSVVKQQVDQPGHGKVMVVDGGGSKRAALLGDMLAEKAAANGWEGIIIYGCIRDVDVIRQTDLGVQALGTHPMKTDKRGIGDLNADITFGGVTFKPGHYVYADNNGVIVSPEPLSMPQEQ</sequence>
<name>RRAAH_HAHCH</name>
<feature type="chain" id="PRO_1000013844" description="Putative 4-hydroxy-4-methyl-2-oxoglutarate aldolase">
    <location>
        <begin position="1"/>
        <end position="164"/>
    </location>
</feature>
<feature type="binding site" evidence="1">
    <location>
        <begin position="75"/>
        <end position="78"/>
    </location>
    <ligand>
        <name>substrate</name>
    </ligand>
</feature>
<feature type="binding site" evidence="1">
    <location>
        <position position="97"/>
    </location>
    <ligand>
        <name>substrate</name>
    </ligand>
</feature>
<feature type="binding site" evidence="1">
    <location>
        <position position="98"/>
    </location>
    <ligand>
        <name>a divalent metal cation</name>
        <dbReference type="ChEBI" id="CHEBI:60240"/>
    </ligand>
</feature>
<keyword id="KW-0456">Lyase</keyword>
<keyword id="KW-0479">Metal-binding</keyword>
<keyword id="KW-1185">Reference proteome</keyword>
<gene>
    <name type="ordered locus">HCH_02125</name>
</gene>